<evidence type="ECO:0000250" key="1"/>
<evidence type="ECO:0000250" key="2">
    <source>
        <dbReference type="UniProtKB" id="P04629"/>
    </source>
</evidence>
<evidence type="ECO:0000250" key="3">
    <source>
        <dbReference type="UniProtKB" id="P15209"/>
    </source>
</evidence>
<evidence type="ECO:0000250" key="4">
    <source>
        <dbReference type="UniProtKB" id="Q63604"/>
    </source>
</evidence>
<evidence type="ECO:0000255" key="5"/>
<evidence type="ECO:0000255" key="6">
    <source>
        <dbReference type="PROSITE-ProRule" id="PRU00114"/>
    </source>
</evidence>
<evidence type="ECO:0000255" key="7">
    <source>
        <dbReference type="PROSITE-ProRule" id="PRU00159"/>
    </source>
</evidence>
<evidence type="ECO:0000255" key="8">
    <source>
        <dbReference type="PROSITE-ProRule" id="PRU10028"/>
    </source>
</evidence>
<evidence type="ECO:0000256" key="9">
    <source>
        <dbReference type="SAM" id="MobiDB-lite"/>
    </source>
</evidence>
<evidence type="ECO:0000269" key="10">
    <source>
    </source>
</evidence>
<evidence type="ECO:0000269" key="11">
    <source>
    </source>
</evidence>
<evidence type="ECO:0000303" key="12">
    <source>
    </source>
</evidence>
<evidence type="ECO:0000305" key="13"/>
<keyword id="KW-0025">Alternative splicing</keyword>
<keyword id="KW-0067">ATP-binding</keyword>
<keyword id="KW-1003">Cell membrane</keyword>
<keyword id="KW-0966">Cell projection</keyword>
<keyword id="KW-0963">Cytoplasm</keyword>
<keyword id="KW-0217">Developmental protein</keyword>
<keyword id="KW-0221">Differentiation</keyword>
<keyword id="KW-1015">Disulfide bond</keyword>
<keyword id="KW-0967">Endosome</keyword>
<keyword id="KW-0325">Glycoprotein</keyword>
<keyword id="KW-0393">Immunoglobulin domain</keyword>
<keyword id="KW-0418">Kinase</keyword>
<keyword id="KW-0433">Leucine-rich repeat</keyword>
<keyword id="KW-0472">Membrane</keyword>
<keyword id="KW-0524">Neurogenesis</keyword>
<keyword id="KW-0547">Nucleotide-binding</keyword>
<keyword id="KW-0597">Phosphoprotein</keyword>
<keyword id="KW-0675">Receptor</keyword>
<keyword id="KW-1185">Reference proteome</keyword>
<keyword id="KW-0677">Repeat</keyword>
<keyword id="KW-0732">Signal</keyword>
<keyword id="KW-0770">Synapse</keyword>
<keyword id="KW-0808">Transferase</keyword>
<keyword id="KW-0812">Transmembrane</keyword>
<keyword id="KW-1133">Transmembrane helix</keyword>
<keyword id="KW-0829">Tyrosine-protein kinase</keyword>
<name>NTRK2_CHICK</name>
<reference key="1">
    <citation type="journal article" date="1994" name="Gene">
        <title>Cloning and sequence analysis of a cDNA encoding a novel truncated form of the chicken TrkB receptor.</title>
        <authorList>
            <person name="Vinh N."/>
            <person name="Erdmann K."/>
            <person name="Heumann R."/>
        </authorList>
    </citation>
    <scope>NUCLEOTIDE SEQUENCE [MRNA] (ISOFORM 10)</scope>
    <source>
        <tissue>Brain</tissue>
    </source>
</reference>
<reference key="2">
    <citation type="journal article" date="1993" name="Development">
        <title>Expression and binding characteristics of the BDNF receptor chick trkB.</title>
        <authorList>
            <person name="Dechant G."/>
            <person name="Biffo S."/>
            <person name="Okazawa H."/>
            <person name="Kolbeck R."/>
            <person name="Pottgiesser J."/>
            <person name="Barde Y.-A."/>
        </authorList>
    </citation>
    <scope>NUCLEOTIDE SEQUENCE [MRNA] (ISOFORM 1)</scope>
    <scope>FUNCTION</scope>
    <scope>SUBCELLULAR LOCATION</scope>
    <scope>TISSUE SPECIFICITY</scope>
</reference>
<reference key="3">
    <citation type="journal article" date="1996" name="J. Neurosci.">
        <title>Expression of TrkB receptor isoforms in the developing avian visual system.</title>
        <authorList>
            <person name="Garner A.S."/>
            <person name="Menegay H.J."/>
            <person name="Boeshore K.L."/>
            <person name="Xie X.Y."/>
            <person name="Voci J.M."/>
            <person name="Johnson J.E."/>
            <person name="Large T.H."/>
        </authorList>
    </citation>
    <scope>NUCLEOTIDE SEQUENCE [MRNA] (ISOFORM 1)</scope>
    <scope>PARTIAL NUCLEOTIDE SEQUENCE (ISOFORMS 2; 3; 4; 5; 6; 7; 8; 9; 10; 11 AND 12)</scope>
</reference>
<reference key="4">
    <citation type="journal article" date="1996" name="EMBO J.">
        <title>A splice variant of the neurotrophin receptor trkB with increased specificity for brain-derived neurotrophic factor.</title>
        <authorList>
            <person name="Strohmaier C."/>
            <person name="Carter B.D."/>
            <person name="Urfer R."/>
            <person name="Barde Y.A."/>
            <person name="Dechant G."/>
        </authorList>
    </citation>
    <scope>ALTERNATIVE SPLICING (ISOFORMS 1 AND 9)</scope>
    <scope>LIGAND-BINDING</scope>
    <scope>FUNCTION</scope>
    <scope>CATALYTIC ACTIVITY</scope>
    <scope>SUBCELLULAR LOCATION</scope>
    <scope>PHOSPHORYLATION</scope>
    <scope>TISSUE SPECIFICITY</scope>
</reference>
<organism>
    <name type="scientific">Gallus gallus</name>
    <name type="common">Chicken</name>
    <dbReference type="NCBI Taxonomy" id="9031"/>
    <lineage>
        <taxon>Eukaryota</taxon>
        <taxon>Metazoa</taxon>
        <taxon>Chordata</taxon>
        <taxon>Craniata</taxon>
        <taxon>Vertebrata</taxon>
        <taxon>Euteleostomi</taxon>
        <taxon>Archelosauria</taxon>
        <taxon>Archosauria</taxon>
        <taxon>Dinosauria</taxon>
        <taxon>Saurischia</taxon>
        <taxon>Theropoda</taxon>
        <taxon>Coelurosauria</taxon>
        <taxon>Aves</taxon>
        <taxon>Neognathae</taxon>
        <taxon>Galloanserae</taxon>
        <taxon>Galliformes</taxon>
        <taxon>Phasianidae</taxon>
        <taxon>Phasianinae</taxon>
        <taxon>Gallus</taxon>
    </lineage>
</organism>
<accession>Q91987</accession>
<accession>Q91010</accession>
<protein>
    <recommendedName>
        <fullName>BDNF/NT-3 growth factors receptor</fullName>
        <ecNumber evidence="11">2.7.10.1</ecNumber>
    </recommendedName>
    <alternativeName>
        <fullName>Neurotrophic tyrosine kinase receptor type 2</fullName>
    </alternativeName>
    <alternativeName>
        <fullName>TrkB tyrosine kinase</fullName>
        <shortName>Trk-B</shortName>
    </alternativeName>
</protein>
<comment type="function">
    <text evidence="3 10 11">Receptor tyrosine kinase involved in the development and the maturation of the central and the peripheral nervous systems through regulation of neuron survival, proliferation, migration, differentiation, and synapse formation and plasticity. Receptor for BDNF/brain-derived neurotrophic factor and NTF4/neurotrophin-4 (PubMed:8287802, PubMed:8670834). Alternatively can also bind NTF3/neurotrophin-3 which is less efficient in activating the receptor but regulates neuron survival through NTRK2. Upon ligand-binding, undergoes homodimerization, autophosphorylation and activation (PubMed:8670834). Recruits, phosphorylates and/or activates several downstream effectors including SHC1, FRS2, SH2B1, SH2B2 and PLCG1 that regulate distinct overlapping signaling cascades. Through SHC1, FRS2, SH2B1, SH2B2 activates the GRB2-Ras-MAPK cascade that regulates for instance neuronal differentiation including neurite outgrowth. Through the same effectors controls the Ras-PI3 kinase-AKT1 signaling cascade that mainly regulates growth and survival. Through PLCG1 and the downstream protein kinase C-regulated pathways controls synaptic plasticity. Thereby, plays a role in learning and memory by regulating both short term synaptic function and long-term potentiation. PLCG1 also leads to NF-Kappa-B activation and the transcription of genes involved in cell survival. Hence, it is able to suppress anoikis, the apoptosis resulting from loss of cell-matrix interactions. May also play a role in neutrophin-dependent calcium signaling in glial cells and mediate communication between neurons and glia (By similarity).</text>
</comment>
<comment type="catalytic activity">
    <reaction evidence="8 11">
        <text>L-tyrosyl-[protein] + ATP = O-phospho-L-tyrosyl-[protein] + ADP + H(+)</text>
        <dbReference type="Rhea" id="RHEA:10596"/>
        <dbReference type="Rhea" id="RHEA-COMP:10136"/>
        <dbReference type="Rhea" id="RHEA-COMP:20101"/>
        <dbReference type="ChEBI" id="CHEBI:15378"/>
        <dbReference type="ChEBI" id="CHEBI:30616"/>
        <dbReference type="ChEBI" id="CHEBI:46858"/>
        <dbReference type="ChEBI" id="CHEBI:61978"/>
        <dbReference type="ChEBI" id="CHEBI:456216"/>
        <dbReference type="EC" id="2.7.10.1"/>
    </reaction>
</comment>
<comment type="activity regulation">
    <text evidence="3 4">The neuronal activity and the influx of calcium positively regulate the kinase activity and the internalization of the receptor which are both important for active signaling. Regulated by NGFR that may control the internalization of the receptor. NGFR may also stimulate the activation by BDNF compared to NTF3 and NTF4. The formation of active receptors dimers able to fully transduce the ligand-mediated signal, may be negatively regulated by the formation of inactive heterodimers with the non-catalytic isoforms (By similarity).</text>
</comment>
<comment type="subunit">
    <text evidence="2 3 4">Exists in a dynamic equilibrium between monomeric (low affinity) and dimeric (high affinity) structures. Interacts (phosphorylated upon activation by BDNF) with SHC1; mediates SHC1 phosphorylation and activation. Interacts (phosphorylated upon activation by BDNF) with PLCG1 and/or PLCG2; mediates PLCG1 phosphorylation and activation. Interacts with SH2B1 and SH2B2. Interacts with NGFR; may regulate the ligand specificity of the receptor (By similarity). Interacts with SORCS2; this interaction is important for normal targeting to post-synaptic densities in response to high-frequency stimulation (By similarity). Interacts (phosphorylated upon ligand-binding) with SH2D1A; regulates NTRK2. Interacts with SQSTM1 and KIDINS220 (By similarity). Interacts (phosphorylated upon ligand-binding) with FRS2; activates the MAPK signaling pathway (By similarity). Interacts with APPL1 (By similarity). Interacts with MAPK8IP3/JIP3 and KLC1; interaction with KLC1 is mediated by MAPK8IP3/JIP3 (By similarity).</text>
</comment>
<comment type="subcellular location">
    <subcellularLocation>
        <location evidence="10 11">Cell membrane</location>
        <topology evidence="13">Single-pass type I membrane protein</topology>
    </subcellularLocation>
    <subcellularLocation>
        <location evidence="1">Endosome membrane</location>
        <topology evidence="1">Single-pass type I membrane protein</topology>
    </subcellularLocation>
    <subcellularLocation>
        <location evidence="4">Cell projection</location>
        <location evidence="4">Axon</location>
    </subcellularLocation>
    <subcellularLocation>
        <location evidence="4">Cell projection</location>
        <location evidence="4">Dendrite</location>
    </subcellularLocation>
    <subcellularLocation>
        <location evidence="4">Cytoplasm</location>
        <location evidence="4">Perinuclear region</location>
    </subcellularLocation>
    <subcellularLocation>
        <location evidence="3">Postsynaptic density</location>
    </subcellularLocation>
    <text evidence="3">Internalized to endosomes upon ligand-binding.</text>
</comment>
<comment type="alternative products">
    <event type="alternative splicing"/>
    <isoform>
        <id>Q91987-1</id>
        <name>1</name>
        <name>Alpha-FL</name>
        <name>cTrkB-L</name>
        <sequence type="displayed"/>
    </isoform>
    <isoform>
        <id>Q91987-2</id>
        <name>2</name>
        <name>Beta-FL</name>
        <sequence type="described" ref="VSP_002914"/>
    </isoform>
    <isoform>
        <id>Q91987-3</id>
        <name>3</name>
        <name>ED</name>
        <sequence type="described" ref="VSP_002915"/>
    </isoform>
    <isoform>
        <id>Q91987-4</id>
        <name>4</name>
        <name>JD</name>
        <sequence type="described" ref="VSP_002923"/>
    </isoform>
    <isoform>
        <id>Q91987-5</id>
        <name>5</name>
        <name>J1</name>
        <sequence type="described" ref="VSP_002920"/>
    </isoform>
    <isoform>
        <id>Q91987-6</id>
        <name>6</name>
        <name>Alpha-T1</name>
        <sequence type="described" ref="VSP_002918 VSP_002919"/>
    </isoform>
    <isoform>
        <id>Q91987-7</id>
        <name>7</name>
        <name>J1+T1</name>
        <sequence type="described" ref="VSP_002920 VSP_002918 VSP_002919"/>
    </isoform>
    <isoform>
        <id>Q91987-8</id>
        <name>8</name>
        <name>J2+T1</name>
        <sequence type="described" ref="VSP_002921 VSP_002918 VSP_002919"/>
    </isoform>
    <isoform>
        <id>Q91987-9</id>
        <name>9</name>
        <name>ED J2+T1</name>
        <name>cTrkB-S</name>
        <sequence type="described" ref="VSP_002915 VSP_002921 VSP_002918 VSP_002919"/>
    </isoform>
    <isoform>
        <id>Q91987-10</id>
        <name>10</name>
        <name>J1+J2+T1</name>
        <sequence type="described" ref="VSP_002922 VSP_002918 VSP_002919"/>
    </isoform>
    <isoform>
        <id>Q91987-11</id>
        <name>11</name>
        <name>T3</name>
        <sequence type="described" ref="VSP_002916 VSP_002917"/>
    </isoform>
    <isoform>
        <id>Q91987-12</id>
        <name>12</name>
        <name>ED J1+J2+T1</name>
        <sequence type="described" ref="VSP_002915 VSP_002922 VSP_002918 VSP_002919"/>
    </isoform>
    <text>Additional isoforms seem to exist.</text>
</comment>
<comment type="tissue specificity">
    <text evidence="10 11">Detected in embryonic brain and orsal root ganglia.</text>
</comment>
<comment type="PTM">
    <text evidence="11">Ligand-mediated auto-phosphorylation.</text>
</comment>
<comment type="miscellaneous">
    <molecule>Isoform 2</molecule>
    <text evidence="13">It is unsure whether Leu-144 or Met-188 is the initiator of isoform 2.</text>
</comment>
<comment type="miscellaneous">
    <molecule>Isoform 9</molecule>
    <text evidence="13">Specifically activated by BDNF but not NTF3 and NTF4.</text>
</comment>
<comment type="similarity">
    <text evidence="7">Belongs to the protein kinase superfamily. Tyr protein kinase family. Insulin receptor subfamily.</text>
</comment>
<gene>
    <name type="primary">NTRK2</name>
    <name type="synonym">TRKB</name>
</gene>
<dbReference type="EC" id="2.7.10.1" evidence="11"/>
<dbReference type="EMBL" id="X77251">
    <property type="protein sequence ID" value="CAA54468.1"/>
    <property type="molecule type" value="mRNA"/>
</dbReference>
<dbReference type="EMBL" id="X77252">
    <property type="protein sequence ID" value="CAA54469.1"/>
    <property type="molecule type" value="mRNA"/>
</dbReference>
<dbReference type="EMBL" id="X74109">
    <property type="protein sequence ID" value="CAA52210.1"/>
    <property type="molecule type" value="mRNA"/>
</dbReference>
<dbReference type="PIR" id="S59938">
    <property type="entry name" value="S44099"/>
</dbReference>
<dbReference type="PIR" id="S59939">
    <property type="entry name" value="S44098"/>
</dbReference>
<dbReference type="RefSeq" id="NP_990562.1">
    <property type="nucleotide sequence ID" value="NM_205231.1"/>
</dbReference>
<dbReference type="RefSeq" id="XP_015135735.1">
    <property type="nucleotide sequence ID" value="XM_015280249.1"/>
</dbReference>
<dbReference type="RefSeq" id="XP_015135738.1">
    <property type="nucleotide sequence ID" value="XM_015280252.1"/>
</dbReference>
<dbReference type="RefSeq" id="XP_015135740.1">
    <property type="nucleotide sequence ID" value="XM_015280254.1"/>
</dbReference>
<dbReference type="RefSeq" id="XP_015135741.1">
    <property type="nucleotide sequence ID" value="XM_015280255.1"/>
</dbReference>
<dbReference type="RefSeq" id="XP_015135742.1">
    <property type="nucleotide sequence ID" value="XM_015280256.1"/>
</dbReference>
<dbReference type="RefSeq" id="XP_015135743.1">
    <property type="nucleotide sequence ID" value="XM_015280257.1"/>
</dbReference>
<dbReference type="SMR" id="Q91987"/>
<dbReference type="FunCoup" id="Q91987">
    <property type="interactions" value="306"/>
</dbReference>
<dbReference type="STRING" id="9031.ENSGALP00000069010"/>
<dbReference type="GlyCosmos" id="Q91987">
    <property type="glycosylation" value="11 sites, No reported glycans"/>
</dbReference>
<dbReference type="GlyGen" id="Q91987">
    <property type="glycosylation" value="11 sites"/>
</dbReference>
<dbReference type="PaxDb" id="9031-ENSGALP00000020539"/>
<dbReference type="GeneID" id="396157"/>
<dbReference type="KEGG" id="gga:396157"/>
<dbReference type="CTD" id="4915"/>
<dbReference type="VEuPathDB" id="HostDB:geneid_396157"/>
<dbReference type="eggNOG" id="KOG1026">
    <property type="taxonomic scope" value="Eukaryota"/>
</dbReference>
<dbReference type="HOGENOM" id="CLU_000288_74_1_1"/>
<dbReference type="InParanoid" id="Q91987"/>
<dbReference type="OrthoDB" id="3256376at2759"/>
<dbReference type="PhylomeDB" id="Q91987"/>
<dbReference type="BRENDA" id="2.7.10.1">
    <property type="organism ID" value="1306"/>
</dbReference>
<dbReference type="Reactome" id="R-GGA-1257604">
    <property type="pathway name" value="PIP3 activates AKT signaling"/>
</dbReference>
<dbReference type="Reactome" id="R-GGA-6811558">
    <property type="pathway name" value="PI5P, PP2A and IER3 Regulate PI3K/AKT Signaling"/>
</dbReference>
<dbReference type="Reactome" id="R-GGA-9026527">
    <property type="pathway name" value="Activated NTRK2 signals through PLCG1"/>
</dbReference>
<dbReference type="Reactome" id="R-GGA-9028731">
    <property type="pathway name" value="Activated NTRK2 signals through FRS2 and FRS3"/>
</dbReference>
<dbReference type="Reactome" id="R-GGA-9032759">
    <property type="pathway name" value="NTRK2 activates RAC1"/>
</dbReference>
<dbReference type="PRO" id="PR:Q91987"/>
<dbReference type="Proteomes" id="UP000000539">
    <property type="component" value="Chromosome Z"/>
</dbReference>
<dbReference type="Bgee" id="ENSGALG00000012594">
    <property type="expression patterns" value="Expressed in brain and 9 other cell types or tissues"/>
</dbReference>
<dbReference type="GO" id="GO:0030424">
    <property type="term" value="C:axon"/>
    <property type="evidence" value="ECO:0000250"/>
    <property type="project" value="UniProtKB"/>
</dbReference>
<dbReference type="GO" id="GO:0043679">
    <property type="term" value="C:axon terminus"/>
    <property type="evidence" value="ECO:0000318"/>
    <property type="project" value="GO_Central"/>
</dbReference>
<dbReference type="GO" id="GO:0030425">
    <property type="term" value="C:dendrite"/>
    <property type="evidence" value="ECO:0000250"/>
    <property type="project" value="UniProtKB"/>
</dbReference>
<dbReference type="GO" id="GO:0043197">
    <property type="term" value="C:dendritic spine"/>
    <property type="evidence" value="ECO:0000318"/>
    <property type="project" value="GO_Central"/>
</dbReference>
<dbReference type="GO" id="GO:0010008">
    <property type="term" value="C:endosome membrane"/>
    <property type="evidence" value="ECO:0007669"/>
    <property type="project" value="UniProtKB-SubCell"/>
</dbReference>
<dbReference type="GO" id="GO:0048471">
    <property type="term" value="C:perinuclear region of cytoplasm"/>
    <property type="evidence" value="ECO:0000250"/>
    <property type="project" value="UniProtKB"/>
</dbReference>
<dbReference type="GO" id="GO:0005886">
    <property type="term" value="C:plasma membrane"/>
    <property type="evidence" value="ECO:0000250"/>
    <property type="project" value="UniProtKB"/>
</dbReference>
<dbReference type="GO" id="GO:0014069">
    <property type="term" value="C:postsynaptic density"/>
    <property type="evidence" value="ECO:0000318"/>
    <property type="project" value="GO_Central"/>
</dbReference>
<dbReference type="GO" id="GO:0043235">
    <property type="term" value="C:receptor complex"/>
    <property type="evidence" value="ECO:0000318"/>
    <property type="project" value="GO_Central"/>
</dbReference>
<dbReference type="GO" id="GO:0005524">
    <property type="term" value="F:ATP binding"/>
    <property type="evidence" value="ECO:0007669"/>
    <property type="project" value="UniProtKB-KW"/>
</dbReference>
<dbReference type="GO" id="GO:0048403">
    <property type="term" value="F:brain-derived neurotrophic factor binding"/>
    <property type="evidence" value="ECO:0000250"/>
    <property type="project" value="UniProtKB"/>
</dbReference>
<dbReference type="GO" id="GO:0060175">
    <property type="term" value="F:brain-derived neurotrophic factor receptor activity"/>
    <property type="evidence" value="ECO:0000250"/>
    <property type="project" value="UniProtKB"/>
</dbReference>
<dbReference type="GO" id="GO:0005004">
    <property type="term" value="F:GPI-linked ephrin receptor activity"/>
    <property type="evidence" value="ECO:0000314"/>
    <property type="project" value="BHF-UCL"/>
</dbReference>
<dbReference type="GO" id="GO:0043121">
    <property type="term" value="F:neurotrophin binding"/>
    <property type="evidence" value="ECO:0000250"/>
    <property type="project" value="UniProtKB"/>
</dbReference>
<dbReference type="GO" id="GO:0042803">
    <property type="term" value="F:protein homodimerization activity"/>
    <property type="evidence" value="ECO:0000250"/>
    <property type="project" value="UniProtKB"/>
</dbReference>
<dbReference type="GO" id="GO:0005244">
    <property type="term" value="F:voltage-gated monoatomic ion channel activity"/>
    <property type="evidence" value="ECO:0000314"/>
    <property type="project" value="AgBase"/>
</dbReference>
<dbReference type="GO" id="GO:0031547">
    <property type="term" value="P:brain-derived neurotrophic factor receptor signaling pathway"/>
    <property type="evidence" value="ECO:0000250"/>
    <property type="project" value="UniProtKB"/>
</dbReference>
<dbReference type="GO" id="GO:0007169">
    <property type="term" value="P:cell surface receptor protein tyrosine kinase signaling pathway"/>
    <property type="evidence" value="ECO:0000318"/>
    <property type="project" value="GO_Central"/>
</dbReference>
<dbReference type="GO" id="GO:1990416">
    <property type="term" value="P:cellular response to brain-derived neurotrophic factor stimulus"/>
    <property type="evidence" value="ECO:0000318"/>
    <property type="project" value="GO_Central"/>
</dbReference>
<dbReference type="GO" id="GO:0021954">
    <property type="term" value="P:central nervous system neuron development"/>
    <property type="evidence" value="ECO:0000250"/>
    <property type="project" value="UniProtKB"/>
</dbReference>
<dbReference type="GO" id="GO:0021987">
    <property type="term" value="P:cerebral cortex development"/>
    <property type="evidence" value="ECO:0000250"/>
    <property type="project" value="UniProtKB"/>
</dbReference>
<dbReference type="GO" id="GO:0048668">
    <property type="term" value="P:collateral sprouting"/>
    <property type="evidence" value="ECO:0000315"/>
    <property type="project" value="BHF-UCL"/>
</dbReference>
<dbReference type="GO" id="GO:0007612">
    <property type="term" value="P:learning"/>
    <property type="evidence" value="ECO:0000250"/>
    <property type="project" value="UniProtKB"/>
</dbReference>
<dbReference type="GO" id="GO:0043524">
    <property type="term" value="P:negative regulation of neuron apoptotic process"/>
    <property type="evidence" value="ECO:0000250"/>
    <property type="project" value="UniProtKB"/>
</dbReference>
<dbReference type="GO" id="GO:0030182">
    <property type="term" value="P:neuron differentiation"/>
    <property type="evidence" value="ECO:0000250"/>
    <property type="project" value="UniProtKB"/>
</dbReference>
<dbReference type="GO" id="GO:0001764">
    <property type="term" value="P:neuron migration"/>
    <property type="evidence" value="ECO:0000250"/>
    <property type="project" value="UniProtKB"/>
</dbReference>
<dbReference type="GO" id="GO:0050772">
    <property type="term" value="P:positive regulation of axonogenesis"/>
    <property type="evidence" value="ECO:0000250"/>
    <property type="project" value="UniProtKB"/>
</dbReference>
<dbReference type="GO" id="GO:0008284">
    <property type="term" value="P:positive regulation of cell population proliferation"/>
    <property type="evidence" value="ECO:0000250"/>
    <property type="project" value="UniProtKB"/>
</dbReference>
<dbReference type="GO" id="GO:0048672">
    <property type="term" value="P:positive regulation of collateral sprouting"/>
    <property type="evidence" value="ECO:0000315"/>
    <property type="project" value="BHF-UCL"/>
</dbReference>
<dbReference type="GO" id="GO:0010628">
    <property type="term" value="P:positive regulation of gene expression"/>
    <property type="evidence" value="ECO:0000250"/>
    <property type="project" value="UniProtKB"/>
</dbReference>
<dbReference type="GO" id="GO:0043410">
    <property type="term" value="P:positive regulation of MAPK cascade"/>
    <property type="evidence" value="ECO:0000250"/>
    <property type="project" value="UniProtKB"/>
</dbReference>
<dbReference type="GO" id="GO:0010976">
    <property type="term" value="P:positive regulation of neuron projection development"/>
    <property type="evidence" value="ECO:0000250"/>
    <property type="project" value="UniProtKB"/>
</dbReference>
<dbReference type="GO" id="GO:0051897">
    <property type="term" value="P:positive regulation of phosphatidylinositol 3-kinase/protein kinase B signal transduction"/>
    <property type="evidence" value="ECO:0000250"/>
    <property type="project" value="UniProtKB"/>
</dbReference>
<dbReference type="GO" id="GO:0046777">
    <property type="term" value="P:protein autophosphorylation"/>
    <property type="evidence" value="ECO:0000250"/>
    <property type="project" value="UniProtKB"/>
</dbReference>
<dbReference type="GO" id="GO:1903859">
    <property type="term" value="P:regulation of dendrite extension"/>
    <property type="evidence" value="ECO:0000314"/>
    <property type="project" value="AgBase"/>
</dbReference>
<dbReference type="GO" id="GO:0043087">
    <property type="term" value="P:regulation of GTPase activity"/>
    <property type="evidence" value="ECO:0000250"/>
    <property type="project" value="UniProtKB"/>
</dbReference>
<dbReference type="CDD" id="cd05855">
    <property type="entry name" value="IgI_TrkB_d5"/>
    <property type="match status" value="1"/>
</dbReference>
<dbReference type="CDD" id="cd05093">
    <property type="entry name" value="PTKc_TrkB"/>
    <property type="match status" value="1"/>
</dbReference>
<dbReference type="FunFam" id="2.60.40.10:FF:000239">
    <property type="entry name" value="BDNF/NT-3 growth factors receptor"/>
    <property type="match status" value="1"/>
</dbReference>
<dbReference type="FunFam" id="1.10.510.10:FF:000034">
    <property type="entry name" value="Tyrosine-protein kinase receptor"/>
    <property type="match status" value="1"/>
</dbReference>
<dbReference type="FunFam" id="2.60.40.10:FF:000486">
    <property type="entry name" value="Tyrosine-protein kinase receptor"/>
    <property type="match status" value="1"/>
</dbReference>
<dbReference type="FunFam" id="3.30.200.20:FF:000033">
    <property type="entry name" value="Tyrosine-protein kinase receptor"/>
    <property type="match status" value="1"/>
</dbReference>
<dbReference type="FunFam" id="3.80.10.10:FF:000319">
    <property type="entry name" value="Tyrosine-protein kinase receptor"/>
    <property type="match status" value="1"/>
</dbReference>
<dbReference type="Gene3D" id="2.60.40.10">
    <property type="entry name" value="Immunoglobulins"/>
    <property type="match status" value="2"/>
</dbReference>
<dbReference type="Gene3D" id="3.30.200.20">
    <property type="entry name" value="Phosphorylase Kinase, domain 1"/>
    <property type="match status" value="1"/>
</dbReference>
<dbReference type="Gene3D" id="3.80.10.10">
    <property type="entry name" value="Ribonuclease Inhibitor"/>
    <property type="match status" value="1"/>
</dbReference>
<dbReference type="Gene3D" id="1.10.510.10">
    <property type="entry name" value="Transferase(Phosphotransferase) domain 1"/>
    <property type="match status" value="1"/>
</dbReference>
<dbReference type="InterPro" id="IPR000483">
    <property type="entry name" value="Cys-rich_flank_reg_C"/>
</dbReference>
<dbReference type="InterPro" id="IPR007110">
    <property type="entry name" value="Ig-like_dom"/>
</dbReference>
<dbReference type="InterPro" id="IPR036179">
    <property type="entry name" value="Ig-like_dom_sf"/>
</dbReference>
<dbReference type="InterPro" id="IPR013783">
    <property type="entry name" value="Ig-like_fold"/>
</dbReference>
<dbReference type="InterPro" id="IPR013098">
    <property type="entry name" value="Ig_I-set"/>
</dbReference>
<dbReference type="InterPro" id="IPR003599">
    <property type="entry name" value="Ig_sub"/>
</dbReference>
<dbReference type="InterPro" id="IPR003598">
    <property type="entry name" value="Ig_sub2"/>
</dbReference>
<dbReference type="InterPro" id="IPR011009">
    <property type="entry name" value="Kinase-like_dom_sf"/>
</dbReference>
<dbReference type="InterPro" id="IPR001611">
    <property type="entry name" value="Leu-rich_rpt"/>
</dbReference>
<dbReference type="InterPro" id="IPR032675">
    <property type="entry name" value="LRR_dom_sf"/>
</dbReference>
<dbReference type="InterPro" id="IPR000372">
    <property type="entry name" value="LRRNT"/>
</dbReference>
<dbReference type="InterPro" id="IPR020777">
    <property type="entry name" value="NTRK"/>
</dbReference>
<dbReference type="InterPro" id="IPR020455">
    <property type="entry name" value="NTRK2"/>
</dbReference>
<dbReference type="InterPro" id="IPR031635">
    <property type="entry name" value="NTRK_LRRCT"/>
</dbReference>
<dbReference type="InterPro" id="IPR000719">
    <property type="entry name" value="Prot_kinase_dom"/>
</dbReference>
<dbReference type="InterPro" id="IPR017441">
    <property type="entry name" value="Protein_kinase_ATP_BS"/>
</dbReference>
<dbReference type="InterPro" id="IPR050122">
    <property type="entry name" value="RTK"/>
</dbReference>
<dbReference type="InterPro" id="IPR001245">
    <property type="entry name" value="Ser-Thr/Tyr_kinase_cat_dom"/>
</dbReference>
<dbReference type="InterPro" id="IPR008266">
    <property type="entry name" value="Tyr_kinase_AS"/>
</dbReference>
<dbReference type="InterPro" id="IPR020635">
    <property type="entry name" value="Tyr_kinase_cat_dom"/>
</dbReference>
<dbReference type="InterPro" id="IPR002011">
    <property type="entry name" value="Tyr_kinase_rcpt_2_CS"/>
</dbReference>
<dbReference type="PANTHER" id="PTHR24416:SF136">
    <property type="entry name" value="BDNF_NT-3 GROWTH FACTORS RECEPTOR"/>
    <property type="match status" value="1"/>
</dbReference>
<dbReference type="PANTHER" id="PTHR24416">
    <property type="entry name" value="TYROSINE-PROTEIN KINASE RECEPTOR"/>
    <property type="match status" value="1"/>
</dbReference>
<dbReference type="Pfam" id="PF07679">
    <property type="entry name" value="I-set"/>
    <property type="match status" value="2"/>
</dbReference>
<dbReference type="Pfam" id="PF13855">
    <property type="entry name" value="LRR_8"/>
    <property type="match status" value="1"/>
</dbReference>
<dbReference type="Pfam" id="PF16920">
    <property type="entry name" value="LRRCT_2"/>
    <property type="match status" value="1"/>
</dbReference>
<dbReference type="Pfam" id="PF07714">
    <property type="entry name" value="PK_Tyr_Ser-Thr"/>
    <property type="match status" value="1"/>
</dbReference>
<dbReference type="PRINTS" id="PR01939">
    <property type="entry name" value="NTKRECEPTOR"/>
</dbReference>
<dbReference type="PRINTS" id="PR01941">
    <property type="entry name" value="NTKRECEPTOR2"/>
</dbReference>
<dbReference type="PRINTS" id="PR00109">
    <property type="entry name" value="TYRKINASE"/>
</dbReference>
<dbReference type="SMART" id="SM00409">
    <property type="entry name" value="IG"/>
    <property type="match status" value="1"/>
</dbReference>
<dbReference type="SMART" id="SM00408">
    <property type="entry name" value="IGc2"/>
    <property type="match status" value="1"/>
</dbReference>
<dbReference type="SMART" id="SM00082">
    <property type="entry name" value="LRRCT"/>
    <property type="match status" value="1"/>
</dbReference>
<dbReference type="SMART" id="SM00013">
    <property type="entry name" value="LRRNT"/>
    <property type="match status" value="1"/>
</dbReference>
<dbReference type="SMART" id="SM00220">
    <property type="entry name" value="S_TKc"/>
    <property type="match status" value="1"/>
</dbReference>
<dbReference type="SMART" id="SM00219">
    <property type="entry name" value="TyrKc"/>
    <property type="match status" value="1"/>
</dbReference>
<dbReference type="SUPFAM" id="SSF48726">
    <property type="entry name" value="Immunoglobulin"/>
    <property type="match status" value="2"/>
</dbReference>
<dbReference type="SUPFAM" id="SSF52058">
    <property type="entry name" value="L domain-like"/>
    <property type="match status" value="1"/>
</dbReference>
<dbReference type="SUPFAM" id="SSF56112">
    <property type="entry name" value="Protein kinase-like (PK-like)"/>
    <property type="match status" value="1"/>
</dbReference>
<dbReference type="PROSITE" id="PS50835">
    <property type="entry name" value="IG_LIKE"/>
    <property type="match status" value="1"/>
</dbReference>
<dbReference type="PROSITE" id="PS51450">
    <property type="entry name" value="LRR"/>
    <property type="match status" value="1"/>
</dbReference>
<dbReference type="PROSITE" id="PS00107">
    <property type="entry name" value="PROTEIN_KINASE_ATP"/>
    <property type="match status" value="1"/>
</dbReference>
<dbReference type="PROSITE" id="PS50011">
    <property type="entry name" value="PROTEIN_KINASE_DOM"/>
    <property type="match status" value="1"/>
</dbReference>
<dbReference type="PROSITE" id="PS00109">
    <property type="entry name" value="PROTEIN_KINASE_TYR"/>
    <property type="match status" value="1"/>
</dbReference>
<dbReference type="PROSITE" id="PS00239">
    <property type="entry name" value="RECEPTOR_TYR_KIN_II"/>
    <property type="match status" value="1"/>
</dbReference>
<feature type="signal peptide" evidence="1">
    <location>
        <begin position="1"/>
        <end position="31"/>
    </location>
</feature>
<feature type="chain" id="PRO_0000016730" description="BDNF/NT-3 growth factors receptor">
    <location>
        <begin position="32"/>
        <end position="818"/>
    </location>
</feature>
<feature type="topological domain" description="Extracellular" evidence="5">
    <location>
        <begin position="32"/>
        <end position="426"/>
    </location>
</feature>
<feature type="transmembrane region" description="Helical" evidence="5">
    <location>
        <begin position="427"/>
        <end position="450"/>
    </location>
</feature>
<feature type="topological domain" description="Cytoplasmic" evidence="5">
    <location>
        <begin position="451"/>
        <end position="818"/>
    </location>
</feature>
<feature type="repeat" description="LRR 1">
    <location>
        <begin position="71"/>
        <end position="92"/>
    </location>
</feature>
<feature type="repeat" description="LRR 2">
    <location>
        <begin position="95"/>
        <end position="116"/>
    </location>
</feature>
<feature type="domain" description="Ig-like C2-type 1">
    <location>
        <begin position="196"/>
        <end position="281"/>
    </location>
</feature>
<feature type="domain" description="Ig-like C2-type 2">
    <location>
        <begin position="295"/>
        <end position="364"/>
    </location>
</feature>
<feature type="domain" description="Protein kinase" evidence="7">
    <location>
        <begin position="534"/>
        <end position="803"/>
    </location>
</feature>
<feature type="region of interest" description="Provides specificity for BDNF as ligand versus NTF3 and NTF4">
    <location>
        <begin position="384"/>
        <end position="394"/>
    </location>
</feature>
<feature type="region of interest" description="Disordered" evidence="9">
    <location>
        <begin position="400"/>
        <end position="420"/>
    </location>
</feature>
<feature type="region of interest" description="Disordered" evidence="9">
    <location>
        <begin position="469"/>
        <end position="494"/>
    </location>
</feature>
<feature type="compositionally biased region" description="Polar residues" evidence="9">
    <location>
        <begin position="400"/>
        <end position="418"/>
    </location>
</feature>
<feature type="compositionally biased region" description="Polar residues" evidence="9">
    <location>
        <begin position="481"/>
        <end position="491"/>
    </location>
</feature>
<feature type="active site" description="Proton acceptor" evidence="7 8">
    <location>
        <position position="672"/>
    </location>
</feature>
<feature type="binding site" evidence="7">
    <location>
        <begin position="540"/>
        <end position="548"/>
    </location>
    <ligand>
        <name>ATP</name>
        <dbReference type="ChEBI" id="CHEBI:30616"/>
    </ligand>
</feature>
<feature type="binding site" evidence="7">
    <location>
        <position position="568"/>
    </location>
    <ligand>
        <name>ATP</name>
        <dbReference type="ChEBI" id="CHEBI:30616"/>
    </ligand>
</feature>
<feature type="site" description="Interaction with SHC1" evidence="1">
    <location>
        <position position="512"/>
    </location>
</feature>
<feature type="site" description="Interaction with SH2D1A" evidence="1">
    <location>
        <position position="702"/>
    </location>
</feature>
<feature type="site" description="Interaction with PLCG1" evidence="1">
    <location>
        <position position="813"/>
    </location>
</feature>
<feature type="modified residue" description="Phosphotyrosine; by autocatalysis" evidence="3">
    <location>
        <position position="512"/>
    </location>
</feature>
<feature type="modified residue" description="Phosphotyrosine; by autocatalysis" evidence="4">
    <location>
        <position position="698"/>
    </location>
</feature>
<feature type="modified residue" description="Phosphotyrosine; by autocatalysis" evidence="4">
    <location>
        <position position="702"/>
    </location>
</feature>
<feature type="modified residue" description="Phosphotyrosine; by autocatalysis" evidence="4">
    <location>
        <position position="703"/>
    </location>
</feature>
<feature type="modified residue" description="Phosphotyrosine; by autocatalysis" evidence="4">
    <location>
        <position position="813"/>
    </location>
</feature>
<feature type="glycosylation site" description="N-linked (GlcNAc...) asparagine" evidence="5">
    <location>
        <position position="66"/>
    </location>
</feature>
<feature type="glycosylation site" description="N-linked (GlcNAc...) asparagine" evidence="5">
    <location>
        <position position="94"/>
    </location>
</feature>
<feature type="glycosylation site" description="N-linked (GlcNAc...) asparagine" evidence="5">
    <location>
        <position position="120"/>
    </location>
</feature>
<feature type="glycosylation site" description="N-linked (GlcNAc...) asparagine" evidence="5">
    <location>
        <position position="199"/>
    </location>
</feature>
<feature type="glycosylation site" description="N-linked (GlcNAc...) asparagine" evidence="5">
    <location>
        <position position="204"/>
    </location>
</feature>
<feature type="glycosylation site" description="N-linked (GlcNAc...) asparagine" evidence="5">
    <location>
        <position position="226"/>
    </location>
</feature>
<feature type="glycosylation site" description="N-linked (GlcNAc...) asparagine" evidence="5">
    <location>
        <position position="253"/>
    </location>
</feature>
<feature type="glycosylation site" description="N-linked (GlcNAc...) asparagine" evidence="5">
    <location>
        <position position="287"/>
    </location>
</feature>
<feature type="glycosylation site" description="N-linked (GlcNAc...) asparagine" evidence="5">
    <location>
        <position position="324"/>
    </location>
</feature>
<feature type="glycosylation site" description="N-linked (GlcNAc...) asparagine" evidence="5">
    <location>
        <position position="337"/>
    </location>
</feature>
<feature type="glycosylation site" description="N-linked (GlcNAc...) asparagine" evidence="5">
    <location>
        <position position="408"/>
    </location>
</feature>
<feature type="disulfide bond" evidence="6">
    <location>
        <begin position="32"/>
        <end position="38"/>
    </location>
</feature>
<feature type="disulfide bond" evidence="6">
    <location>
        <begin position="36"/>
        <end position="45"/>
    </location>
</feature>
<feature type="disulfide bond" evidence="6">
    <location>
        <begin position="151"/>
        <end position="175"/>
    </location>
</feature>
<feature type="disulfide bond" evidence="6">
    <location>
        <begin position="153"/>
        <end position="193"/>
    </location>
</feature>
<feature type="disulfide bond" evidence="6">
    <location>
        <begin position="217"/>
        <end position="265"/>
    </location>
</feature>
<feature type="disulfide bond" evidence="6">
    <location>
        <begin position="301"/>
        <end position="344"/>
    </location>
</feature>
<feature type="splice variant" id="VSP_002914" description="In isoform 2." evidence="13">
    <location>
        <begin position="1"/>
        <end position="187"/>
    </location>
</feature>
<feature type="splice variant" id="VSP_002915" description="In isoform 3, isoform 9 and isoform 12." evidence="13">
    <location>
        <begin position="384"/>
        <end position="394"/>
    </location>
</feature>
<feature type="splice variant" id="VSP_002916" description="In isoform 11." evidence="13">
    <original>GPSSVI</original>
    <variation>ERGRRK</variation>
    <location>
        <begin position="462"/>
        <end position="467"/>
    </location>
</feature>
<feature type="splice variant" id="VSP_002923" description="In isoform 4." evidence="13">
    <location>
        <begin position="462"/>
        <end position="465"/>
    </location>
</feature>
<feature type="splice variant" id="VSP_002922" description="In isoform 10 and isoform 12." evidence="12">
    <original>G</original>
    <variation>VHGEVKGVGLVDQIWLSLQDCDNEEQVMVTVNSDVHNNSTASDNNRLG</variation>
    <location>
        <position position="462"/>
    </location>
</feature>
<feature type="splice variant" id="VSP_002920" description="In isoform 5 and isoform 7." evidence="13">
    <original>G</original>
    <variation>VHGEVKGVGLVDQIWLSLQDCDNEG</variation>
    <location>
        <position position="462"/>
    </location>
</feature>
<feature type="splice variant" id="VSP_002921" description="In isoform 8 and isoform 9." evidence="13">
    <original>G</original>
    <variation>EQVMVTVNSDVHNNSTASDNNRLG</variation>
    <location>
        <position position="462"/>
    </location>
</feature>
<feature type="splice variant" id="VSP_002918" description="In isoform 6, isoform 7, isoform 8, isoform 9, isoform 10 and isoform 12." evidence="12">
    <original>PSSVISNDDDS</original>
    <variation>FVLFHKIPLDG</variation>
    <location>
        <begin position="463"/>
        <end position="473"/>
    </location>
</feature>
<feature type="splice variant" id="VSP_002917" description="In isoform 11." evidence="13">
    <location>
        <begin position="468"/>
        <end position="818"/>
    </location>
</feature>
<feature type="splice variant" id="VSP_002919" description="In isoform 6, isoform 7, isoform 8, isoform 9, isoform 10 and isoform 12." evidence="12">
    <location>
        <begin position="474"/>
        <end position="818"/>
    </location>
</feature>
<sequence>MVSWRRRPGPGLARLWGLCCLVLGCWRGALGCPASCRCSSWRIWCSEPVPGITSFPVPQRSTEDDNVTEIYIANQRKLESINDNEVGFYVGLKNLTVVDSGLRFVSRQAFVKNINLQYINLSRNKLSSLSKKPFRHLGLSDLILVDNPFKCSCEIMWIKKFQETKFYTEAQDIYCVDDNNKRIALMDMKVPNCDLPSANLSNYNITVVEGKSITLYCDTTGGPPPNVSWVLTNLVSNHESDTSKNPASLTIKNVSSMDSGLWISCVAENIVGEVQTSAELTVFFAPNITFIESPTPDHHWCIPFTVKGNPKPTLQWFYEGAILNESEYICTKIHVINQSEYHGCLQLDNPTHLNNGAYTLLAKNEYGEDEKRVDAHFMSVPGDGSGPIVDPDVYEYETTPNDLGDTTNNSNQITSPDVSNKENEDSITVYVVVGIAALVCTGLVIMLIILKFGRHSKFGMKGPSSVISNDDDSASPLHHISNGSNTPSSSEGGPDAVIIGMTKIPVIENPQYFGITNSQLKPDTFVQHIKRHNIVLKRELGEGAFGKVFLAECYNLCPEQDKILVAVKTLKDASDNARKDFHREAELLTNLQHEHIVKFYGVCVEGDPLIMVFEYMKHGDLNKFLRAHGPDAVLMAEGNRPAELTQSQMLHIAQQIAAGMVYLASQHFVHRDLATRNCLVGENLLVKIGDFGMSRDVYSTDYYRVGGHTMLPIRWMPPESIMYRKFTTESDVWSLGVVLWEIFTYGKQPWYQLSNNEVIECITQGRVLQRPRTCPKEVYDLMLGCWQREPHMRLNIKEIHSLLQNLAKASPVYLDILG</sequence>
<proteinExistence type="evidence at protein level"/>